<sequence length="208" mass="22783">MSTPHWFDQGSLVLASNNKGKVAEFEKLFEQLKLPVEIIPQGHLNIPDAIEDGLSFIENAIIKARHASKISGKPAMADDSGICVPVLGGAPGIYSARYAGEHGDDAANNAKLLNDLLPFRKNGEAIEGMFVCVLALVTHAEDPLPQIFQGIWHGEILEAPRGENGFGYDPLFWLPELQVSSAELSKEEKNKISHRGQAMQLFRESLQK</sequence>
<evidence type="ECO:0000255" key="1">
    <source>
        <dbReference type="HAMAP-Rule" id="MF_01405"/>
    </source>
</evidence>
<feature type="chain" id="PRO_1000145478" description="dITP/XTP pyrophosphatase">
    <location>
        <begin position="1"/>
        <end position="208"/>
    </location>
</feature>
<feature type="active site" description="Proton acceptor" evidence="1">
    <location>
        <position position="79"/>
    </location>
</feature>
<feature type="binding site" evidence="1">
    <location>
        <begin position="16"/>
        <end position="21"/>
    </location>
    <ligand>
        <name>substrate</name>
    </ligand>
</feature>
<feature type="binding site" evidence="1">
    <location>
        <position position="79"/>
    </location>
    <ligand>
        <name>Mg(2+)</name>
        <dbReference type="ChEBI" id="CHEBI:18420"/>
    </ligand>
</feature>
<feature type="binding site" evidence="1">
    <location>
        <position position="80"/>
    </location>
    <ligand>
        <name>substrate</name>
    </ligand>
</feature>
<feature type="binding site" evidence="1">
    <location>
        <begin position="166"/>
        <end position="169"/>
    </location>
    <ligand>
        <name>substrate</name>
    </ligand>
</feature>
<feature type="binding site" evidence="1">
    <location>
        <position position="189"/>
    </location>
    <ligand>
        <name>substrate</name>
    </ligand>
</feature>
<feature type="binding site" evidence="1">
    <location>
        <begin position="194"/>
        <end position="195"/>
    </location>
    <ligand>
        <name>substrate</name>
    </ligand>
</feature>
<protein>
    <recommendedName>
        <fullName evidence="1">dITP/XTP pyrophosphatase</fullName>
        <ecNumber evidence="1">3.6.1.66</ecNumber>
    </recommendedName>
    <alternativeName>
        <fullName evidence="1">Non-canonical purine NTP pyrophosphatase</fullName>
    </alternativeName>
    <alternativeName>
        <fullName evidence="1">Non-standard purine NTP pyrophosphatase</fullName>
    </alternativeName>
    <alternativeName>
        <fullName evidence="1">Nucleoside-triphosphate diphosphatase</fullName>
    </alternativeName>
    <alternativeName>
        <fullName evidence="1">Nucleoside-triphosphate pyrophosphatase</fullName>
        <shortName evidence="1">NTPase</shortName>
    </alternativeName>
</protein>
<proteinExistence type="inferred from homology"/>
<dbReference type="EC" id="3.6.1.66" evidence="1"/>
<dbReference type="EMBL" id="CP000863">
    <property type="protein sequence ID" value="ACC55791.1"/>
    <property type="molecule type" value="Genomic_DNA"/>
</dbReference>
<dbReference type="SMR" id="B2I3B3"/>
<dbReference type="KEGG" id="abc:ACICU_00479"/>
<dbReference type="HOGENOM" id="CLU_082080_0_3_6"/>
<dbReference type="Proteomes" id="UP000008839">
    <property type="component" value="Chromosome"/>
</dbReference>
<dbReference type="GO" id="GO:0005829">
    <property type="term" value="C:cytosol"/>
    <property type="evidence" value="ECO:0007669"/>
    <property type="project" value="TreeGrafter"/>
</dbReference>
<dbReference type="GO" id="GO:0035870">
    <property type="term" value="F:dITP diphosphatase activity"/>
    <property type="evidence" value="ECO:0007669"/>
    <property type="project" value="RHEA"/>
</dbReference>
<dbReference type="GO" id="GO:0036220">
    <property type="term" value="F:ITP diphosphatase activity"/>
    <property type="evidence" value="ECO:0007669"/>
    <property type="project" value="UniProtKB-EC"/>
</dbReference>
<dbReference type="GO" id="GO:0046872">
    <property type="term" value="F:metal ion binding"/>
    <property type="evidence" value="ECO:0007669"/>
    <property type="project" value="UniProtKB-KW"/>
</dbReference>
<dbReference type="GO" id="GO:0000166">
    <property type="term" value="F:nucleotide binding"/>
    <property type="evidence" value="ECO:0007669"/>
    <property type="project" value="UniProtKB-KW"/>
</dbReference>
<dbReference type="GO" id="GO:0017111">
    <property type="term" value="F:ribonucleoside triphosphate phosphatase activity"/>
    <property type="evidence" value="ECO:0007669"/>
    <property type="project" value="InterPro"/>
</dbReference>
<dbReference type="GO" id="GO:0036222">
    <property type="term" value="F:XTP diphosphatase activity"/>
    <property type="evidence" value="ECO:0007669"/>
    <property type="project" value="RHEA"/>
</dbReference>
<dbReference type="GO" id="GO:0009117">
    <property type="term" value="P:nucleotide metabolic process"/>
    <property type="evidence" value="ECO:0007669"/>
    <property type="project" value="UniProtKB-KW"/>
</dbReference>
<dbReference type="GO" id="GO:0009146">
    <property type="term" value="P:purine nucleoside triphosphate catabolic process"/>
    <property type="evidence" value="ECO:0007669"/>
    <property type="project" value="UniProtKB-UniRule"/>
</dbReference>
<dbReference type="CDD" id="cd00515">
    <property type="entry name" value="HAM1"/>
    <property type="match status" value="1"/>
</dbReference>
<dbReference type="FunFam" id="3.90.950.10:FF:000001">
    <property type="entry name" value="dITP/XTP pyrophosphatase"/>
    <property type="match status" value="1"/>
</dbReference>
<dbReference type="Gene3D" id="3.90.950.10">
    <property type="match status" value="1"/>
</dbReference>
<dbReference type="HAMAP" id="MF_01405">
    <property type="entry name" value="Non_canon_purine_NTPase"/>
    <property type="match status" value="1"/>
</dbReference>
<dbReference type="InterPro" id="IPR020922">
    <property type="entry name" value="dITP/XTP_pyrophosphatase"/>
</dbReference>
<dbReference type="InterPro" id="IPR029001">
    <property type="entry name" value="ITPase-like_fam"/>
</dbReference>
<dbReference type="InterPro" id="IPR002637">
    <property type="entry name" value="RdgB/HAM1"/>
</dbReference>
<dbReference type="NCBIfam" id="TIGR00042">
    <property type="entry name" value="RdgB/HAM1 family non-canonical purine NTP pyrophosphatase"/>
    <property type="match status" value="1"/>
</dbReference>
<dbReference type="PANTHER" id="PTHR11067:SF9">
    <property type="entry name" value="INOSINE TRIPHOSPHATE PYROPHOSPHATASE"/>
    <property type="match status" value="1"/>
</dbReference>
<dbReference type="PANTHER" id="PTHR11067">
    <property type="entry name" value="INOSINE TRIPHOSPHATE PYROPHOSPHATASE/HAM1 PROTEIN"/>
    <property type="match status" value="1"/>
</dbReference>
<dbReference type="Pfam" id="PF01725">
    <property type="entry name" value="Ham1p_like"/>
    <property type="match status" value="1"/>
</dbReference>
<dbReference type="SUPFAM" id="SSF52972">
    <property type="entry name" value="ITPase-like"/>
    <property type="match status" value="1"/>
</dbReference>
<comment type="function">
    <text evidence="1">Pyrophosphatase that catalyzes the hydrolysis of nucleoside triphosphates to their monophosphate derivatives, with a high preference for the non-canonical purine nucleotides XTP (xanthosine triphosphate), dITP (deoxyinosine triphosphate) and ITP. Seems to function as a house-cleaning enzyme that removes non-canonical purine nucleotides from the nucleotide pool, thus preventing their incorporation into DNA/RNA and avoiding chromosomal lesions.</text>
</comment>
<comment type="catalytic activity">
    <reaction evidence="1">
        <text>XTP + H2O = XMP + diphosphate + H(+)</text>
        <dbReference type="Rhea" id="RHEA:28610"/>
        <dbReference type="ChEBI" id="CHEBI:15377"/>
        <dbReference type="ChEBI" id="CHEBI:15378"/>
        <dbReference type="ChEBI" id="CHEBI:33019"/>
        <dbReference type="ChEBI" id="CHEBI:57464"/>
        <dbReference type="ChEBI" id="CHEBI:61314"/>
        <dbReference type="EC" id="3.6.1.66"/>
    </reaction>
</comment>
<comment type="catalytic activity">
    <reaction evidence="1">
        <text>dITP + H2O = dIMP + diphosphate + H(+)</text>
        <dbReference type="Rhea" id="RHEA:28342"/>
        <dbReference type="ChEBI" id="CHEBI:15377"/>
        <dbReference type="ChEBI" id="CHEBI:15378"/>
        <dbReference type="ChEBI" id="CHEBI:33019"/>
        <dbReference type="ChEBI" id="CHEBI:61194"/>
        <dbReference type="ChEBI" id="CHEBI:61382"/>
        <dbReference type="EC" id="3.6.1.66"/>
    </reaction>
</comment>
<comment type="catalytic activity">
    <reaction evidence="1">
        <text>ITP + H2O = IMP + diphosphate + H(+)</text>
        <dbReference type="Rhea" id="RHEA:29399"/>
        <dbReference type="ChEBI" id="CHEBI:15377"/>
        <dbReference type="ChEBI" id="CHEBI:15378"/>
        <dbReference type="ChEBI" id="CHEBI:33019"/>
        <dbReference type="ChEBI" id="CHEBI:58053"/>
        <dbReference type="ChEBI" id="CHEBI:61402"/>
        <dbReference type="EC" id="3.6.1.66"/>
    </reaction>
</comment>
<comment type="cofactor">
    <cofactor evidence="1">
        <name>Mg(2+)</name>
        <dbReference type="ChEBI" id="CHEBI:18420"/>
    </cofactor>
    <text evidence="1">Binds 1 Mg(2+) ion per subunit.</text>
</comment>
<comment type="subunit">
    <text evidence="1">Homodimer.</text>
</comment>
<comment type="similarity">
    <text evidence="1">Belongs to the HAM1 NTPase family.</text>
</comment>
<name>IXTPA_ACIBC</name>
<organism>
    <name type="scientific">Acinetobacter baumannii (strain ACICU)</name>
    <dbReference type="NCBI Taxonomy" id="405416"/>
    <lineage>
        <taxon>Bacteria</taxon>
        <taxon>Pseudomonadati</taxon>
        <taxon>Pseudomonadota</taxon>
        <taxon>Gammaproteobacteria</taxon>
        <taxon>Moraxellales</taxon>
        <taxon>Moraxellaceae</taxon>
        <taxon>Acinetobacter</taxon>
        <taxon>Acinetobacter calcoaceticus/baumannii complex</taxon>
    </lineage>
</organism>
<gene>
    <name type="ordered locus">ACICU_00479</name>
</gene>
<accession>B2I3B3</accession>
<keyword id="KW-0378">Hydrolase</keyword>
<keyword id="KW-0460">Magnesium</keyword>
<keyword id="KW-0479">Metal-binding</keyword>
<keyword id="KW-0546">Nucleotide metabolism</keyword>
<keyword id="KW-0547">Nucleotide-binding</keyword>
<reference key="1">
    <citation type="journal article" date="2008" name="Antimicrob. Agents Chemother.">
        <title>Whole-genome pyrosequencing of an epidemic multidrug-resistant Acinetobacter baumannii strain belonging to the European clone II group.</title>
        <authorList>
            <person name="Iacono M."/>
            <person name="Villa L."/>
            <person name="Fortini D."/>
            <person name="Bordoni R."/>
            <person name="Imperi F."/>
            <person name="Bonnal R.J."/>
            <person name="Sicheritz-Ponten T."/>
            <person name="De Bellis G."/>
            <person name="Visca P."/>
            <person name="Cassone A."/>
            <person name="Carattoli A."/>
        </authorList>
    </citation>
    <scope>NUCLEOTIDE SEQUENCE [LARGE SCALE GENOMIC DNA]</scope>
    <source>
        <strain>ACICU</strain>
    </source>
</reference>